<evidence type="ECO:0000250" key="1">
    <source>
        <dbReference type="UniProtKB" id="A0A0H3LM39"/>
    </source>
</evidence>
<evidence type="ECO:0000250" key="2">
    <source>
        <dbReference type="UniProtKB" id="Q6P5W5"/>
    </source>
</evidence>
<evidence type="ECO:0000250" key="3">
    <source>
        <dbReference type="UniProtKB" id="Q78IQ7"/>
    </source>
</evidence>
<evidence type="ECO:0000255" key="4"/>
<evidence type="ECO:0000256" key="5">
    <source>
        <dbReference type="SAM" id="MobiDB-lite"/>
    </source>
</evidence>
<evidence type="ECO:0000269" key="6">
    <source>
    </source>
</evidence>
<evidence type="ECO:0000303" key="7">
    <source>
    </source>
</evidence>
<evidence type="ECO:0000305" key="8"/>
<evidence type="ECO:0007744" key="9">
    <source>
        <dbReference type="PDB" id="4X82"/>
    </source>
</evidence>
<evidence type="ECO:0007829" key="10">
    <source>
        <dbReference type="PDB" id="4X82"/>
    </source>
</evidence>
<reference key="1">
    <citation type="journal article" date="2013" name="Science">
        <title>Comparative analysis of bat genomes provides insight into the evolution of flight and immunity.</title>
        <authorList>
            <person name="Zhang G."/>
            <person name="Cowled C."/>
            <person name="Shi Z."/>
            <person name="Huang Z."/>
            <person name="Bishop-Lilly K.A."/>
            <person name="Fang X."/>
            <person name="Wynne J.W."/>
            <person name="Xiong Z."/>
            <person name="Baker M.L."/>
            <person name="Zhao W."/>
            <person name="Tachedjian M."/>
            <person name="Zhu Y."/>
            <person name="Zhou P."/>
            <person name="Jiang X."/>
            <person name="Ng J."/>
            <person name="Yang L."/>
            <person name="Wu L."/>
            <person name="Xiao J."/>
            <person name="Feng Y."/>
            <person name="Chen Y."/>
            <person name="Sun X."/>
            <person name="Zhang Y."/>
            <person name="Marsh G.A."/>
            <person name="Crameri G."/>
            <person name="Broder C.C."/>
            <person name="Frey K.G."/>
            <person name="Wang L.F."/>
            <person name="Wang J."/>
        </authorList>
    </citation>
    <scope>NUCLEOTIDE SEQUENCE [LARGE SCALE GENOMIC DNA]</scope>
</reference>
<reference evidence="9" key="2">
    <citation type="journal article" date="2016" name="Nat. Commun.">
        <title>Structural insights of ZIP4 extracellular domain critical for optimal zinc transport.</title>
        <authorList>
            <person name="Zhang T."/>
            <person name="Sui D."/>
            <person name="Hu J."/>
        </authorList>
    </citation>
    <scope>X-RAY CRYSTALLOGRAPHY (2.76 ANGSTROMS) OF 36-322</scope>
    <scope>DISULFIDE BONDS</scope>
    <scope>FUNCTION</scope>
    <scope>TRANSPORTER ACTIVITY</scope>
    <scope>SUBUNIT</scope>
</reference>
<protein>
    <recommendedName>
        <fullName>Zinc transporter ZIP4</fullName>
    </recommendedName>
    <alternativeName>
        <fullName>Solute carrier family 39 member 4</fullName>
    </alternativeName>
    <alternativeName>
        <fullName>Zrt- and Irt-like protein 4</fullName>
        <shortName>ZIP-4</shortName>
    </alternativeName>
</protein>
<feature type="signal peptide" evidence="4">
    <location>
        <begin position="1"/>
        <end position="27"/>
    </location>
</feature>
<feature type="chain" id="PRO_5003969332" description="Zinc transporter ZIP4">
    <location>
        <begin position="28"/>
        <end position="644"/>
    </location>
</feature>
<feature type="topological domain" description="Extracellular" evidence="8">
    <location>
        <begin position="28"/>
        <end position="323"/>
    </location>
</feature>
<feature type="transmembrane region" description="Helical; Name=1" evidence="1">
    <location>
        <begin position="324"/>
        <end position="344"/>
    </location>
</feature>
<feature type="topological domain" description="Cytoplasmic" evidence="8">
    <location>
        <begin position="345"/>
        <end position="355"/>
    </location>
</feature>
<feature type="transmembrane region" description="Helical; Name=2" evidence="1">
    <location>
        <begin position="356"/>
        <end position="376"/>
    </location>
</feature>
<feature type="topological domain" description="Extracellular" evidence="8">
    <location>
        <begin position="377"/>
        <end position="404"/>
    </location>
</feature>
<feature type="transmembrane region" description="Helical; Name=3" evidence="1">
    <location>
        <begin position="405"/>
        <end position="425"/>
    </location>
</feature>
<feature type="topological domain" description="Cytoplasmic" evidence="8">
    <location>
        <begin position="426"/>
        <end position="495"/>
    </location>
</feature>
<feature type="transmembrane region" description="Helical; Name=4" evidence="1">
    <location>
        <begin position="496"/>
        <end position="515"/>
    </location>
</feature>
<feature type="topological domain" description="Extracellular" evidence="8">
    <location>
        <begin position="516"/>
        <end position="523"/>
    </location>
</feature>
<feature type="transmembrane region" description="Helical; Name=5" evidence="1">
    <location>
        <begin position="524"/>
        <end position="550"/>
    </location>
</feature>
<feature type="topological domain" description="Cytoplasmic" evidence="8">
    <location>
        <begin position="551"/>
        <end position="555"/>
    </location>
</feature>
<feature type="transmembrane region" description="Helical; Name=6" evidence="1">
    <location>
        <begin position="556"/>
        <end position="576"/>
    </location>
</feature>
<feature type="topological domain" description="Extracellular" evidence="8">
    <location>
        <begin position="577"/>
        <end position="583"/>
    </location>
</feature>
<feature type="transmembrane region" description="Helical; Name=7" evidence="1">
    <location>
        <begin position="584"/>
        <end position="604"/>
    </location>
</feature>
<feature type="topological domain" description="Cytoplasmic" evidence="8">
    <location>
        <begin position="605"/>
        <end position="614"/>
    </location>
</feature>
<feature type="transmembrane region" description="Helical; Name=8" evidence="1">
    <location>
        <begin position="615"/>
        <end position="635"/>
    </location>
</feature>
<feature type="topological domain" description="Extracellular" evidence="8">
    <location>
        <begin position="636"/>
        <end position="644"/>
    </location>
</feature>
<feature type="region of interest" description="Disordered" evidence="5">
    <location>
        <begin position="231"/>
        <end position="259"/>
    </location>
</feature>
<feature type="region of interest" description="Disordered" evidence="5">
    <location>
        <begin position="456"/>
        <end position="484"/>
    </location>
</feature>
<feature type="short sequence motif" description="Essential for SLC39A4 endocytosis" evidence="2">
    <location>
        <begin position="449"/>
        <end position="451"/>
    </location>
</feature>
<feature type="compositionally biased region" description="Basic and acidic residues" evidence="5">
    <location>
        <begin position="233"/>
        <end position="244"/>
    </location>
</feature>
<feature type="compositionally biased region" description="Polar residues" evidence="5">
    <location>
        <begin position="247"/>
        <end position="259"/>
    </location>
</feature>
<feature type="compositionally biased region" description="Basic and acidic residues" evidence="5">
    <location>
        <begin position="456"/>
        <end position="467"/>
    </location>
</feature>
<feature type="binding site" description="M1 metal binding site" evidence="1">
    <location>
        <position position="504"/>
    </location>
    <ligand>
        <name>Zn(2+)</name>
        <dbReference type="ChEBI" id="CHEBI:29105"/>
        <label>1</label>
    </ligand>
</feature>
<feature type="binding site" description="M2 metal binding site" evidence="1">
    <location>
        <position position="505"/>
    </location>
    <ligand>
        <name>Zn(2+)</name>
        <dbReference type="ChEBI" id="CHEBI:29105"/>
        <label>2</label>
    </ligand>
</feature>
<feature type="binding site" description="M1 metal binding site" evidence="1">
    <location>
        <position position="508"/>
    </location>
    <ligand>
        <name>Zn(2+)</name>
        <dbReference type="ChEBI" id="CHEBI:29105"/>
        <label>1</label>
    </ligand>
</feature>
<feature type="binding site" description="M2 metal binding site" evidence="1">
    <location>
        <position position="508"/>
    </location>
    <ligand>
        <name>Zn(2+)</name>
        <dbReference type="ChEBI" id="CHEBI:29105"/>
        <label>2</label>
    </ligand>
</feature>
<feature type="binding site" description="M1 metal binding site" evidence="1">
    <location>
        <position position="533"/>
    </location>
    <ligand>
        <name>Zn(2+)</name>
        <dbReference type="ChEBI" id="CHEBI:29105"/>
        <label>1</label>
    </ligand>
</feature>
<feature type="binding site" description="M2 metal binding site" evidence="1">
    <location>
        <position position="534"/>
    </location>
    <ligand>
        <name>Zn(2+)</name>
        <dbReference type="ChEBI" id="CHEBI:29105"/>
        <label>2</label>
    </ligand>
</feature>
<feature type="binding site" description="M1 metal binding site" evidence="1">
    <location>
        <position position="537"/>
    </location>
    <ligand>
        <name>Zn(2+)</name>
        <dbReference type="ChEBI" id="CHEBI:29105"/>
        <label>1</label>
    </ligand>
</feature>
<feature type="site" description="Essential role in Zn(2+) sensing" evidence="2">
    <location>
        <position position="508"/>
    </location>
</feature>
<feature type="disulfide bond" evidence="6 9">
    <location>
        <begin position="59"/>
        <end position="64"/>
    </location>
</feature>
<feature type="disulfide bond" evidence="6 9">
    <location>
        <begin position="67"/>
        <end position="103"/>
    </location>
</feature>
<feature type="disulfide bond" evidence="6 9">
    <location>
        <begin position="153"/>
        <end position="188"/>
    </location>
</feature>
<feature type="disulfide bond" evidence="6 9">
    <location>
        <begin position="266"/>
        <end position="305"/>
    </location>
</feature>
<feature type="helix" evidence="10">
    <location>
        <begin position="38"/>
        <end position="41"/>
    </location>
</feature>
<feature type="helix" evidence="10">
    <location>
        <begin position="43"/>
        <end position="56"/>
    </location>
</feature>
<feature type="helix" evidence="10">
    <location>
        <begin position="63"/>
        <end position="66"/>
    </location>
</feature>
<feature type="helix" evidence="10">
    <location>
        <begin position="70"/>
        <end position="75"/>
    </location>
</feature>
<feature type="helix" evidence="10">
    <location>
        <begin position="85"/>
        <end position="97"/>
    </location>
</feature>
<feature type="helix" evidence="10">
    <location>
        <begin position="99"/>
        <end position="107"/>
    </location>
</feature>
<feature type="helix" evidence="10">
    <location>
        <begin position="111"/>
        <end position="123"/>
    </location>
</feature>
<feature type="turn" evidence="10">
    <location>
        <begin position="125"/>
        <end position="127"/>
    </location>
</feature>
<feature type="helix" evidence="10">
    <location>
        <begin position="128"/>
        <end position="142"/>
    </location>
</feature>
<feature type="helix" evidence="10">
    <location>
        <begin position="156"/>
        <end position="163"/>
    </location>
</feature>
<feature type="helix" evidence="10">
    <location>
        <begin position="172"/>
        <end position="185"/>
    </location>
</feature>
<feature type="helix" evidence="10">
    <location>
        <begin position="195"/>
        <end position="204"/>
    </location>
</feature>
<feature type="strand" evidence="10">
    <location>
        <begin position="211"/>
        <end position="213"/>
    </location>
</feature>
<feature type="helix" evidence="10">
    <location>
        <begin position="215"/>
        <end position="224"/>
    </location>
</feature>
<feature type="helix" evidence="10">
    <location>
        <begin position="261"/>
        <end position="264"/>
    </location>
</feature>
<feature type="helix" evidence="10">
    <location>
        <begin position="269"/>
        <end position="275"/>
    </location>
</feature>
<feature type="turn" evidence="10">
    <location>
        <begin position="280"/>
        <end position="282"/>
    </location>
</feature>
<feature type="helix" evidence="10">
    <location>
        <begin position="286"/>
        <end position="302"/>
    </location>
</feature>
<gene>
    <name evidence="2" type="primary">SLC39A4</name>
    <name evidence="7" type="synonym">ZIP4</name>
</gene>
<accession>L5KLU7</accession>
<sequence>MAILAWLEPRPLLAVLVLVLTMRMAQPAHLLTLLSSGQGALDRVALGGLLNTLAARVHCTSGPCGKCLSVDDLLALGRPEEPGHLARLSAAAALYLSDPEGTCEDIRAGRWASRADHLLALLEGPKALAPGLSRLLQRIQAQTTGQPSAGEACVDPPQLLREAGVAGAPGSPGPVLATLLEHVGRGSCFHTLPTPQYFVDFVFQQSHGNTPNISVAELAALMQRLGVGGVTETHSDHHHQEKRVNRQGPTPLTAPNSSSDTWDTVCLSARDVMAVYGLSEQTGVTPEAWAQLSPALLQQQLSGACSPQPSHPAQNQLSQAEKYLYGSLATLLICLCSTFGLLLLTCAACSTAAHYVIQTFLGMAVGALTGDALLHLTPKVLGLHQHGGDSEHRADSHGPQTTWRLVVALSGLYVFFLFEKLCDLLLPQDPEDRKGTPRSHSGHSHGMSLQLAPRELRPPKQPHEGSRADLVAEESPELLSPEPRRKSPELRLLPYMITLGDGLHNFADGLAVGAAFASSWKTGLATSLAVFCHEVPHELGDFAALLHAGLPVSRALLLNLASGLTAFAGLYVALALGVGEESESWTLAVAIGLFLYVALCDMLPAMLNVRDPRPWLLFLLHNVGLLGGWAVLLLLSLYEDSIAL</sequence>
<comment type="function">
    <text evidence="2 3 6">Selective transporter that mediates the uptake of Zn(2+) (PubMed:27321477). Plays an essential role for dietary zinc uptake from small intestine (By similarity). The Zn(2+) uniporter activity is regulated by zinc availability. Also exhibits polyspecific binding and transport of Cu(2+), Cd(2+) and possibly Ni(2+) but at higher concentrations (By similarity).</text>
</comment>
<comment type="catalytic activity">
    <reaction evidence="6">
        <text>Zn(2+)(in) = Zn(2+)(out)</text>
        <dbReference type="Rhea" id="RHEA:29351"/>
        <dbReference type="ChEBI" id="CHEBI:29105"/>
    </reaction>
</comment>
<comment type="subunit">
    <text evidence="6">Homodimer.</text>
</comment>
<comment type="subcellular location">
    <subcellularLocation>
        <location evidence="3">Cell membrane</location>
        <topology evidence="1">Multi-pass membrane protein</topology>
    </subcellularLocation>
    <subcellularLocation>
        <location evidence="3">Recycling endosome membrane</location>
        <topology evidence="1">Multi-pass membrane protein</topology>
    </subcellularLocation>
    <subcellularLocation>
        <location evidence="3">Apical cell membrane</location>
        <topology evidence="1">Multi-pass membrane protein</topology>
    </subcellularLocation>
    <text evidence="3">Colocalized with TFRC in the recycling endosomes. Cycles between endosomal compartments and the plasma membrane in response to zinc availability. Translocates to the apical membrane during zinc deficiency.</text>
</comment>
<comment type="domain">
    <text evidence="2">The two metal binding sites M1 and M2 that are halfway through the membrane form a binuclear metal center. M1 is essential to Zn(2+) transport, while the other, M2 appears to have an auxiliary role presumably by acting as an additional transport site that can modulate the properties of the primary transport site. The binuclear metal center plays a key role in Zn(2+) sensing.</text>
</comment>
<comment type="PTM">
    <text evidence="3">The extracellular N-terminal ectodomain is cleaved when cells are Zn(2+) deficient, N-terminally cleaved SLC39A4 is internalized at a faster rate.</text>
</comment>
<comment type="PTM">
    <text evidence="2">Under excess Zn(2+) conditions, SLC39A4 on the cell surface is rapidly endocytosed, ubiquitinated and degraded.</text>
</comment>
<comment type="PTM">
    <text evidence="2">Glycosylated.</text>
</comment>
<comment type="similarity">
    <text evidence="8">Belongs to the ZIP transporter (TC 2.A.5) family.</text>
</comment>
<keyword id="KW-0002">3D-structure</keyword>
<keyword id="KW-1003">Cell membrane</keyword>
<keyword id="KW-1015">Disulfide bond</keyword>
<keyword id="KW-0967">Endosome</keyword>
<keyword id="KW-0406">Ion transport</keyword>
<keyword id="KW-0472">Membrane</keyword>
<keyword id="KW-0479">Metal-binding</keyword>
<keyword id="KW-1185">Reference proteome</keyword>
<keyword id="KW-0732">Signal</keyword>
<keyword id="KW-0812">Transmembrane</keyword>
<keyword id="KW-1133">Transmembrane helix</keyword>
<keyword id="KW-0813">Transport</keyword>
<keyword id="KW-0832">Ubl conjugation</keyword>
<keyword id="KW-0862">Zinc</keyword>
<keyword id="KW-0864">Zinc transport</keyword>
<organism>
    <name type="scientific">Pteropus alecto</name>
    <name type="common">Black flying fox</name>
    <dbReference type="NCBI Taxonomy" id="9402"/>
    <lineage>
        <taxon>Eukaryota</taxon>
        <taxon>Metazoa</taxon>
        <taxon>Chordata</taxon>
        <taxon>Craniata</taxon>
        <taxon>Vertebrata</taxon>
        <taxon>Euteleostomi</taxon>
        <taxon>Mammalia</taxon>
        <taxon>Eutheria</taxon>
        <taxon>Laurasiatheria</taxon>
        <taxon>Chiroptera</taxon>
        <taxon>Yinpterochiroptera</taxon>
        <taxon>Pteropodoidea</taxon>
        <taxon>Pteropodidae</taxon>
        <taxon>Pteropodinae</taxon>
        <taxon>Pteropus</taxon>
    </lineage>
</organism>
<dbReference type="EMBL" id="KB030670">
    <property type="protein sequence ID" value="ELK11751.1"/>
    <property type="molecule type" value="Genomic_DNA"/>
</dbReference>
<dbReference type="RefSeq" id="XP_006913051.1">
    <property type="nucleotide sequence ID" value="XM_006912989.2"/>
</dbReference>
<dbReference type="RefSeq" id="XP_024903355.1">
    <property type="nucleotide sequence ID" value="XM_025047587.1"/>
</dbReference>
<dbReference type="PDB" id="4X82">
    <property type="method" value="X-ray"/>
    <property type="resolution" value="2.76 A"/>
    <property type="chains" value="A/B=36-322"/>
</dbReference>
<dbReference type="PDBsum" id="4X82"/>
<dbReference type="SMR" id="L5KLU7"/>
<dbReference type="FunCoup" id="L5KLU7">
    <property type="interactions" value="12"/>
</dbReference>
<dbReference type="STRING" id="9402.L5KLU7"/>
<dbReference type="GeneID" id="102890811"/>
<dbReference type="eggNOG" id="KOG2693">
    <property type="taxonomic scope" value="Eukaryota"/>
</dbReference>
<dbReference type="InParanoid" id="L5KLU7"/>
<dbReference type="Proteomes" id="UP000010552">
    <property type="component" value="Unassembled WGS sequence"/>
</dbReference>
<dbReference type="GO" id="GO:0016324">
    <property type="term" value="C:apical plasma membrane"/>
    <property type="evidence" value="ECO:0000250"/>
    <property type="project" value="UniProtKB"/>
</dbReference>
<dbReference type="GO" id="GO:0005886">
    <property type="term" value="C:plasma membrane"/>
    <property type="evidence" value="ECO:0000250"/>
    <property type="project" value="UniProtKB"/>
</dbReference>
<dbReference type="GO" id="GO:0055038">
    <property type="term" value="C:recycling endosome membrane"/>
    <property type="evidence" value="ECO:0007669"/>
    <property type="project" value="UniProtKB-SubCell"/>
</dbReference>
<dbReference type="GO" id="GO:0042802">
    <property type="term" value="F:identical protein binding"/>
    <property type="evidence" value="ECO:0000314"/>
    <property type="project" value="UniProtKB"/>
</dbReference>
<dbReference type="GO" id="GO:0046872">
    <property type="term" value="F:metal ion binding"/>
    <property type="evidence" value="ECO:0007669"/>
    <property type="project" value="UniProtKB-KW"/>
</dbReference>
<dbReference type="GO" id="GO:0140410">
    <property type="term" value="F:monoatomic cation:bicarbonate symporter activity"/>
    <property type="evidence" value="ECO:0007669"/>
    <property type="project" value="TreeGrafter"/>
</dbReference>
<dbReference type="GO" id="GO:0106219">
    <property type="term" value="F:zinc ion sensor activity"/>
    <property type="evidence" value="ECO:0000250"/>
    <property type="project" value="UniProtKB"/>
</dbReference>
<dbReference type="GO" id="GO:0005385">
    <property type="term" value="F:zinc ion transmembrane transporter activity"/>
    <property type="evidence" value="ECO:0000314"/>
    <property type="project" value="UniProtKB"/>
</dbReference>
<dbReference type="GO" id="GO:0006882">
    <property type="term" value="P:intracellular zinc ion homeostasis"/>
    <property type="evidence" value="ECO:0000250"/>
    <property type="project" value="UniProtKB"/>
</dbReference>
<dbReference type="GO" id="GO:0071578">
    <property type="term" value="P:zinc ion import across plasma membrane"/>
    <property type="evidence" value="ECO:0007669"/>
    <property type="project" value="TreeGrafter"/>
</dbReference>
<dbReference type="GO" id="GO:0071577">
    <property type="term" value="P:zinc ion transmembrane transport"/>
    <property type="evidence" value="ECO:0000314"/>
    <property type="project" value="UniProtKB"/>
</dbReference>
<dbReference type="InterPro" id="IPR003689">
    <property type="entry name" value="ZIP"/>
</dbReference>
<dbReference type="InterPro" id="IPR049406">
    <property type="entry name" value="ZIP4_12_EF-hand"/>
</dbReference>
<dbReference type="InterPro" id="IPR041137">
    <property type="entry name" value="ZIP4_N"/>
</dbReference>
<dbReference type="InterPro" id="IPR050799">
    <property type="entry name" value="ZIP_Transporter"/>
</dbReference>
<dbReference type="PANTHER" id="PTHR12191">
    <property type="entry name" value="SOLUTE CARRIER FAMILY 39"/>
    <property type="match status" value="1"/>
</dbReference>
<dbReference type="PANTHER" id="PTHR12191:SF21">
    <property type="entry name" value="ZINC TRANSPORTER ZIP4"/>
    <property type="match status" value="1"/>
</dbReference>
<dbReference type="Pfam" id="PF21116">
    <property type="entry name" value="EF-hand_Zip"/>
    <property type="match status" value="1"/>
</dbReference>
<dbReference type="Pfam" id="PF02535">
    <property type="entry name" value="Zip"/>
    <property type="match status" value="1"/>
</dbReference>
<dbReference type="Pfam" id="PF18292">
    <property type="entry name" value="ZIP4_domain"/>
    <property type="match status" value="1"/>
</dbReference>
<proteinExistence type="evidence at protein level"/>
<name>S39A4_PTEAL</name>